<feature type="signal peptide">
    <location>
        <begin position="1"/>
        <end position="11"/>
    </location>
</feature>
<feature type="chain" id="PRO_0000006011" description="Complement receptor type 2">
    <location>
        <begin position="12"/>
        <end position="1025"/>
    </location>
</feature>
<feature type="topological domain" description="Extracellular" evidence="2">
    <location>
        <begin position="12"/>
        <end position="963"/>
    </location>
</feature>
<feature type="transmembrane region" description="Helical" evidence="2">
    <location>
        <begin position="964"/>
        <end position="990"/>
    </location>
</feature>
<feature type="topological domain" description="Cytoplasmic" evidence="2">
    <location>
        <begin position="991"/>
        <end position="1025"/>
    </location>
</feature>
<feature type="domain" description="Sushi 1" evidence="3">
    <location>
        <begin position="12"/>
        <end position="75"/>
    </location>
</feature>
<feature type="domain" description="Sushi 2" evidence="3">
    <location>
        <begin position="80"/>
        <end position="140"/>
    </location>
</feature>
<feature type="domain" description="Sushi 3" evidence="3">
    <location>
        <begin position="144"/>
        <end position="204"/>
    </location>
</feature>
<feature type="domain" description="Sushi 4" evidence="3">
    <location>
        <begin position="205"/>
        <end position="265"/>
    </location>
</feature>
<feature type="domain" description="Sushi 5" evidence="3">
    <location>
        <begin position="266"/>
        <end position="336"/>
    </location>
</feature>
<feature type="domain" description="Sushi 6" evidence="3">
    <location>
        <begin position="341"/>
        <end position="400"/>
    </location>
</feature>
<feature type="domain" description="Sushi 7" evidence="3">
    <location>
        <begin position="401"/>
        <end position="460"/>
    </location>
</feature>
<feature type="domain" description="Sushi 8" evidence="3">
    <location>
        <begin position="461"/>
        <end position="516"/>
    </location>
</feature>
<feature type="domain" description="Sushi 9" evidence="3">
    <location>
        <begin position="517"/>
        <end position="587"/>
    </location>
</feature>
<feature type="domain" description="Sushi 10" evidence="3">
    <location>
        <begin position="592"/>
        <end position="651"/>
    </location>
</feature>
<feature type="domain" description="Sushi 11" evidence="3">
    <location>
        <begin position="652"/>
        <end position="706"/>
    </location>
</feature>
<feature type="domain" description="Sushi 12" evidence="3">
    <location>
        <begin position="707"/>
        <end position="771"/>
    </location>
</feature>
<feature type="domain" description="Sushi 13" evidence="3">
    <location>
        <begin position="776"/>
        <end position="835"/>
    </location>
</feature>
<feature type="domain" description="Sushi 14" evidence="3">
    <location>
        <begin position="839"/>
        <end position="899"/>
    </location>
</feature>
<feature type="domain" description="Sushi 15" evidence="3">
    <location>
        <begin position="900"/>
        <end position="960"/>
    </location>
</feature>
<feature type="glycosylation site" description="N-linked (GlcNAc...) asparagine" evidence="2">
    <location>
        <position position="77"/>
    </location>
</feature>
<feature type="glycosylation site" description="N-linked (GlcNAc...) asparagine" evidence="2">
    <location>
        <position position="113"/>
    </location>
</feature>
<feature type="glycosylation site" description="N-linked (GlcNAc...) asparagine" evidence="2">
    <location>
        <position position="276"/>
    </location>
</feature>
<feature type="glycosylation site" description="N-linked (GlcNAc...) asparagine" evidence="2">
    <location>
        <position position="316"/>
    </location>
</feature>
<feature type="glycosylation site" description="N-linked (GlcNAc...) asparagine" evidence="2">
    <location>
        <position position="364"/>
    </location>
</feature>
<feature type="glycosylation site" description="N-linked (GlcNAc...) asparagine" evidence="2">
    <location>
        <position position="380"/>
    </location>
</feature>
<feature type="glycosylation site" description="N-linked (GlcNAc...) asparagine" evidence="2">
    <location>
        <position position="484"/>
    </location>
</feature>
<feature type="glycosylation site" description="N-linked (GlcNAc...) asparagine" evidence="2">
    <location>
        <position position="527"/>
    </location>
</feature>
<feature type="glycosylation site" description="N-linked (GlcNAc...) asparagine" evidence="2">
    <location>
        <position position="615"/>
    </location>
</feature>
<feature type="glycosylation site" description="N-linked (GlcNAc...) asparagine" evidence="2">
    <location>
        <position position="639"/>
    </location>
</feature>
<feature type="glycosylation site" description="N-linked (GlcNAc...) asparagine" evidence="2">
    <location>
        <position position="694"/>
    </location>
</feature>
<feature type="glycosylation site" description="N-linked (GlcNAc...) asparagine" evidence="2">
    <location>
        <position position="754"/>
    </location>
</feature>
<feature type="glycosylation site" description="N-linked (GlcNAc...) asparagine" evidence="2">
    <location>
        <position position="790"/>
    </location>
</feature>
<feature type="glycosylation site" description="N-linked (GlcNAc...) asparagine" evidence="2">
    <location>
        <position position="813"/>
    </location>
</feature>
<feature type="glycosylation site" description="N-linked (GlcNAc...) asparagine" evidence="2">
    <location>
        <position position="823"/>
    </location>
</feature>
<feature type="glycosylation site" description="N-linked (GlcNAc...) asparagine" evidence="2">
    <location>
        <position position="851"/>
    </location>
</feature>
<feature type="glycosylation site" description="N-linked (GlcNAc...) asparagine" evidence="2">
    <location>
        <position position="901"/>
    </location>
</feature>
<feature type="disulfide bond" evidence="3">
    <location>
        <begin position="14"/>
        <end position="56"/>
    </location>
</feature>
<feature type="disulfide bond" evidence="3">
    <location>
        <begin position="42"/>
        <end position="73"/>
    </location>
</feature>
<feature type="disulfide bond" evidence="3">
    <location>
        <begin position="82"/>
        <end position="124"/>
    </location>
</feature>
<feature type="disulfide bond" evidence="3">
    <location>
        <begin position="110"/>
        <end position="138"/>
    </location>
</feature>
<feature type="disulfide bond" evidence="3">
    <location>
        <begin position="146"/>
        <end position="189"/>
    </location>
</feature>
<feature type="disulfide bond" evidence="3">
    <location>
        <begin position="175"/>
        <end position="202"/>
    </location>
</feature>
<feature type="disulfide bond" evidence="3">
    <location>
        <begin position="207"/>
        <end position="248"/>
    </location>
</feature>
<feature type="disulfide bond" evidence="3">
    <location>
        <begin position="234"/>
        <end position="263"/>
    </location>
</feature>
<feature type="disulfide bond" evidence="3">
    <location>
        <begin position="268"/>
        <end position="317"/>
    </location>
</feature>
<feature type="disulfide bond" evidence="3">
    <location>
        <begin position="297"/>
        <end position="334"/>
    </location>
</feature>
<feature type="disulfide bond" evidence="3">
    <location>
        <begin position="343"/>
        <end position="385"/>
    </location>
</feature>
<feature type="disulfide bond" evidence="3">
    <location>
        <begin position="371"/>
        <end position="398"/>
    </location>
</feature>
<feature type="disulfide bond" evidence="3">
    <location>
        <begin position="402"/>
        <end position="445"/>
    </location>
</feature>
<feature type="disulfide bond" evidence="3">
    <location>
        <begin position="431"/>
        <end position="458"/>
    </location>
</feature>
<feature type="disulfide bond" evidence="3">
    <location>
        <begin position="463"/>
        <end position="501"/>
    </location>
</feature>
<feature type="disulfide bond" evidence="3">
    <location>
        <begin position="487"/>
        <end position="514"/>
    </location>
</feature>
<feature type="disulfide bond" evidence="3">
    <location>
        <begin position="519"/>
        <end position="568"/>
    </location>
</feature>
<feature type="disulfide bond" evidence="3">
    <location>
        <begin position="548"/>
        <end position="585"/>
    </location>
</feature>
<feature type="disulfide bond" evidence="3">
    <location>
        <begin position="594"/>
        <end position="636"/>
    </location>
</feature>
<feature type="disulfide bond" evidence="3">
    <location>
        <begin position="622"/>
        <end position="649"/>
    </location>
</feature>
<feature type="disulfide bond" evidence="3">
    <location>
        <begin position="654"/>
        <end position="689"/>
    </location>
</feature>
<feature type="disulfide bond" evidence="3">
    <location>
        <begin position="675"/>
        <end position="704"/>
    </location>
</feature>
<feature type="disulfide bond" evidence="3">
    <location>
        <begin position="709"/>
        <end position="752"/>
    </location>
</feature>
<feature type="disulfide bond" evidence="3">
    <location>
        <begin position="738"/>
        <end position="769"/>
    </location>
</feature>
<feature type="disulfide bond" evidence="3">
    <location>
        <begin position="778"/>
        <end position="820"/>
    </location>
</feature>
<feature type="disulfide bond" evidence="3">
    <location>
        <begin position="806"/>
        <end position="833"/>
    </location>
</feature>
<feature type="disulfide bond" evidence="3">
    <location>
        <begin position="841"/>
        <end position="884"/>
    </location>
</feature>
<feature type="disulfide bond" evidence="3">
    <location>
        <begin position="870"/>
        <end position="897"/>
    </location>
</feature>
<feature type="disulfide bond" evidence="3">
    <location>
        <begin position="902"/>
        <end position="945"/>
    </location>
</feature>
<feature type="disulfide bond" evidence="3">
    <location>
        <begin position="931"/>
        <end position="958"/>
    </location>
</feature>
<feature type="sequence conflict" description="In Ref. 4; AAA37447." evidence="5" ref="4">
    <original>YGS</original>
    <variation>EFR</variation>
    <location>
        <begin position="289"/>
        <end position="291"/>
    </location>
</feature>
<feature type="sequence conflict" description="In Ref. 2; AAA63295." evidence="5" ref="2">
    <original>S</original>
    <variation>T</variation>
    <location>
        <position position="306"/>
    </location>
</feature>
<feature type="sequence conflict" description="In Ref. 2; AAA63295." evidence="5" ref="2">
    <original>P</original>
    <variation>A</variation>
    <location>
        <position position="520"/>
    </location>
</feature>
<feature type="sequence conflict" description="In Ref. 4; AAA37447." evidence="5" ref="4">
    <location>
        <begin position="962"/>
        <end position="963"/>
    </location>
</feature>
<proteinExistence type="evidence at protein level"/>
<accession>P19070</accession>
<comment type="function">
    <text evidence="1">Serves as a receptor for various ligands including complement component CD3d, HNRNPU OR IFNA1. When C3d is bound to antigens, attaches to C3d on B-cell surface and thereby facilitates the recognition and uptake of antigens by B-cells. This interaction enhances B-cell activation and subsequent immune responses. Forms a complex with several partners on the surface of B-cells including CD19, FCRL5 and CD81, to form the B-cell coreceptor complex that plays a crucial role in B-cell activation and signaling. Also induces specific intracellular signaling separately from the BCR and CD19 by activating the tyrosine kinase SRC, which then phosphorylates nucleolin/NCL and triggers AKT and GSK3 kinase activities in a SYK/CD19-independent manner. Acts as a ligand for CD23 (FcepsilonRII), a low-affinity receptor for IgE, which is expressed on B-cells and other immune cells, and thus participates in the regulation of IgE production.</text>
</comment>
<comment type="subunit">
    <text evidence="1">Interacts (via Sushi domain 1 and 2) with C3. Interacts with CD19. Part of a complex composed of CD19, CR2/CD21, CD81 and IFITM1/CD225 in the membrane of mature B-cells. Interacts (via Sushi domain 1 and 2) with FCER2 (via the C-terminus). Interacts with CD23. Interacts with FCRL5. Interacts with CR1. Interacts with INFNA1.</text>
</comment>
<comment type="subcellular location">
    <subcellularLocation>
        <location evidence="1">Cell membrane</location>
        <topology evidence="1">Single-pass type I membrane protein</topology>
    </subcellularLocation>
</comment>
<comment type="tissue specificity">
    <text>B-lymphocytes.</text>
</comment>
<comment type="disruption phenotype">
    <text evidence="4">CR2-deficient mice fail to mount an inflammatory response when compared with wild-type mice (PubMed:12421918).</text>
</comment>
<comment type="similarity">
    <text evidence="5">Belongs to the receptors of complement activation (RCA) family.</text>
</comment>
<sequence length="1025" mass="112995">MLTWFLFYFSEISCDPPPEVKNARKPYYSLPIVPGTVLRYTCSPSYRLIGEKAIFCISENQVHATWDKAPPICESVNKTISCSDPIVPGGFMNKGSKAPFRHGDSVTFTCKANFTMKGSKTVWCQANEMWGPTALPVCESDFPLECPSLPTIHNGHHTGQHVDQFVAGLSVTYSCEPGYLLTGKKTIKCLSSGDWDGVIPTCKEAQCEHPGKFPNGQVKEPLSLQVGTTVYFSCNEGYQLQGQPSSQCVIVEQKAIWTKKPVCKEILCPPPPPVRNGSHTGSFSENVPYGSTVTYTCDPSPEKGVSFTLIGEKTINCTTGSQKTGIWSGPAPYCVLSTSAVLCLQPKIKRGQILSILKDSYSYNDTVAFSCEPGFTLKGNRSIRCNAHGTWEPPVPVCEKGCQAPPKIINGQKEDSYLLNFDPGTSIRYSCDPGYLLVGEDTIHCTPEGKWTPITPQCTVAECKPVGPHLFKRPQNQFIRTAVNSSCDEGFQLSESAYQLCQGTIPWFIEIRLCKEITCPPPPVIHNGTHTWSSSEDVPYGTVVTYMCYPGPEEGVKFKLIGEQTIHCTSDSRGRGSWSSPAPLCKLSLPAVQCTDVHVENGVKLTDNKAPYFYNDSVMFKCDDGYILSGSSQIRCKANNTWDPEKPLCKKEGCEPMRVHGLPDDSHIKLVKRTCQNGYQLTGYTYEKCQNAENGTWFKKIEVCTVILCQPPPKIANGGHTGMMAKHFLYGNEVSYECDEGFYLLGEKSLQCVNDSKGHGSWSGPPPQCLQSSPLTHCPDPEVKHGYKLNKTHSAFSHNDIVHFVCNQGFIMNGSHLIRCHTNNTWLPGVPTCIRKASLGCQSPSTIPNGNHTGGSIARFPPGMSVMYSCYQGFLMAGEARLICTHEGTWSQPPPFCKEVNCSFPEDTNGIQKGFQPGKTYRFGATVTLECEDGYTLEGSPQSQCQDDSQWNPPLALCKYRRWSTIPLICGISVGSALIILMSVGFCMILKHRESNYYTKTRPKEGALHLETREVYSIDPYNPAS</sequence>
<organism>
    <name type="scientific">Mus musculus</name>
    <name type="common">Mouse</name>
    <dbReference type="NCBI Taxonomy" id="10090"/>
    <lineage>
        <taxon>Eukaryota</taxon>
        <taxon>Metazoa</taxon>
        <taxon>Chordata</taxon>
        <taxon>Craniata</taxon>
        <taxon>Vertebrata</taxon>
        <taxon>Euteleostomi</taxon>
        <taxon>Mammalia</taxon>
        <taxon>Eutheria</taxon>
        <taxon>Euarchontoglires</taxon>
        <taxon>Glires</taxon>
        <taxon>Rodentia</taxon>
        <taxon>Myomorpha</taxon>
        <taxon>Muroidea</taxon>
        <taxon>Muridae</taxon>
        <taxon>Murinae</taxon>
        <taxon>Mus</taxon>
        <taxon>Mus</taxon>
    </lineage>
</organism>
<dbReference type="EMBL" id="M81083">
    <property type="protein sequence ID" value="AAA37451.1"/>
    <property type="molecule type" value="mRNA"/>
</dbReference>
<dbReference type="EMBL" id="M35684">
    <property type="protein sequence ID" value="AAA37448.1"/>
    <property type="molecule type" value="mRNA"/>
</dbReference>
<dbReference type="EMBL" id="M61132">
    <property type="protein sequence ID" value="AAA63295.1"/>
    <property type="molecule type" value="mRNA"/>
</dbReference>
<dbReference type="EMBL" id="M35685">
    <property type="protein sequence ID" value="AAA37450.1"/>
    <property type="status" value="ALT_SEQ"/>
    <property type="molecule type" value="mRNA"/>
</dbReference>
<dbReference type="EMBL" id="M29281">
    <property type="protein sequence ID" value="AAA37447.1"/>
    <property type="molecule type" value="mRNA"/>
</dbReference>
<dbReference type="PIR" id="A43526">
    <property type="entry name" value="A43526"/>
</dbReference>
<dbReference type="SMR" id="P19070"/>
<dbReference type="FunCoup" id="P19070">
    <property type="interactions" value="22"/>
</dbReference>
<dbReference type="STRING" id="10090.ENSMUSP00000080938"/>
<dbReference type="GlyCosmos" id="P19070">
    <property type="glycosylation" value="17 sites, No reported glycans"/>
</dbReference>
<dbReference type="GlyGen" id="P19070">
    <property type="glycosylation" value="17 sites"/>
</dbReference>
<dbReference type="PhosphoSitePlus" id="P19070"/>
<dbReference type="PaxDb" id="10090-ENSMUSP00000080938"/>
<dbReference type="PeptideAtlas" id="P19070"/>
<dbReference type="ProteomicsDB" id="278028"/>
<dbReference type="ABCD" id="P19070">
    <property type="antibodies" value="1 sequenced antibody"/>
</dbReference>
<dbReference type="UCSC" id="uc007eey.1">
    <property type="organism name" value="mouse"/>
</dbReference>
<dbReference type="AGR" id="MGI:88489"/>
<dbReference type="MGI" id="MGI:88489">
    <property type="gene designation" value="Cr2"/>
</dbReference>
<dbReference type="eggNOG" id="KOG4297">
    <property type="taxonomic scope" value="Eukaryota"/>
</dbReference>
<dbReference type="InParanoid" id="P19070"/>
<dbReference type="PhylomeDB" id="P19070"/>
<dbReference type="Reactome" id="R-MMU-977606">
    <property type="pathway name" value="Regulation of Complement cascade"/>
</dbReference>
<dbReference type="PRO" id="PR:P19070"/>
<dbReference type="Proteomes" id="UP000000589">
    <property type="component" value="Unplaced"/>
</dbReference>
<dbReference type="RNAct" id="P19070">
    <property type="molecule type" value="protein"/>
</dbReference>
<dbReference type="GO" id="GO:0009897">
    <property type="term" value="C:external side of plasma membrane"/>
    <property type="evidence" value="ECO:0000314"/>
    <property type="project" value="MGI"/>
</dbReference>
<dbReference type="GO" id="GO:0043235">
    <property type="term" value="C:receptor complex"/>
    <property type="evidence" value="ECO:0000266"/>
    <property type="project" value="MGI"/>
</dbReference>
<dbReference type="GO" id="GO:0004875">
    <property type="term" value="F:complement receptor activity"/>
    <property type="evidence" value="ECO:0000315"/>
    <property type="project" value="MGI"/>
</dbReference>
<dbReference type="GO" id="GO:0042803">
    <property type="term" value="F:protein homodimerization activity"/>
    <property type="evidence" value="ECO:0000266"/>
    <property type="project" value="MGI"/>
</dbReference>
<dbReference type="GO" id="GO:0038023">
    <property type="term" value="F:signaling receptor activity"/>
    <property type="evidence" value="ECO:0000314"/>
    <property type="project" value="MGI"/>
</dbReference>
<dbReference type="GO" id="GO:0006958">
    <property type="term" value="P:complement activation, classical pathway"/>
    <property type="evidence" value="ECO:0007669"/>
    <property type="project" value="UniProtKB-KW"/>
</dbReference>
<dbReference type="GO" id="GO:0045087">
    <property type="term" value="P:innate immune response"/>
    <property type="evidence" value="ECO:0007669"/>
    <property type="project" value="UniProtKB-KW"/>
</dbReference>
<dbReference type="CDD" id="cd00033">
    <property type="entry name" value="CCP"/>
    <property type="match status" value="13"/>
</dbReference>
<dbReference type="FunFam" id="2.10.70.10:FF:000070">
    <property type="entry name" value="Complement C3d receptor 2"/>
    <property type="match status" value="2"/>
</dbReference>
<dbReference type="FunFam" id="2.10.70.10:FF:000069">
    <property type="entry name" value="Complement component receptor type 1"/>
    <property type="match status" value="1"/>
</dbReference>
<dbReference type="FunFam" id="2.10.70.10:FF:000055">
    <property type="entry name" value="Complement decay-accelerating factor, GPI-anchored"/>
    <property type="match status" value="1"/>
</dbReference>
<dbReference type="FunFam" id="2.10.70.10:FF:000008">
    <property type="entry name" value="Complement receptor type 1"/>
    <property type="match status" value="1"/>
</dbReference>
<dbReference type="FunFam" id="2.10.70.10:FF:000014">
    <property type="entry name" value="Membrane cofactor protein"/>
    <property type="match status" value="4"/>
</dbReference>
<dbReference type="Gene3D" id="2.10.70.10">
    <property type="entry name" value="Complement Module, domain 1"/>
    <property type="match status" value="13"/>
</dbReference>
<dbReference type="InterPro" id="IPR051277">
    <property type="entry name" value="SEZ6_CSMD_C4BPB_Regulators"/>
</dbReference>
<dbReference type="InterPro" id="IPR035976">
    <property type="entry name" value="Sushi/SCR/CCP_sf"/>
</dbReference>
<dbReference type="InterPro" id="IPR000436">
    <property type="entry name" value="Sushi_SCR_CCP_dom"/>
</dbReference>
<dbReference type="PANTHER" id="PTHR45656">
    <property type="entry name" value="PROTEIN CBR-CLEC-78"/>
    <property type="match status" value="1"/>
</dbReference>
<dbReference type="PANTHER" id="PTHR45656:SF4">
    <property type="entry name" value="PROTEIN CBR-CLEC-78"/>
    <property type="match status" value="1"/>
</dbReference>
<dbReference type="Pfam" id="PF00084">
    <property type="entry name" value="Sushi"/>
    <property type="match status" value="13"/>
</dbReference>
<dbReference type="SMART" id="SM00032">
    <property type="entry name" value="CCP"/>
    <property type="match status" value="14"/>
</dbReference>
<dbReference type="SUPFAM" id="SSF57535">
    <property type="entry name" value="Complement control module/SCR domain"/>
    <property type="match status" value="15"/>
</dbReference>
<dbReference type="PROSITE" id="PS50923">
    <property type="entry name" value="SUSHI"/>
    <property type="match status" value="15"/>
</dbReference>
<evidence type="ECO:0000250" key="1">
    <source>
        <dbReference type="UniProtKB" id="P20023"/>
    </source>
</evidence>
<evidence type="ECO:0000255" key="2"/>
<evidence type="ECO:0000255" key="3">
    <source>
        <dbReference type="PROSITE-ProRule" id="PRU00302"/>
    </source>
</evidence>
<evidence type="ECO:0000269" key="4">
    <source>
    </source>
</evidence>
<evidence type="ECO:0000305" key="5"/>
<keyword id="KW-1003">Cell membrane</keyword>
<keyword id="KW-0180">Complement pathway</keyword>
<keyword id="KW-1015">Disulfide bond</keyword>
<keyword id="KW-0325">Glycoprotein</keyword>
<keyword id="KW-0391">Immunity</keyword>
<keyword id="KW-0399">Innate immunity</keyword>
<keyword id="KW-0472">Membrane</keyword>
<keyword id="KW-0675">Receptor</keyword>
<keyword id="KW-1185">Reference proteome</keyword>
<keyword id="KW-0677">Repeat</keyword>
<keyword id="KW-0732">Signal</keyword>
<keyword id="KW-0768">Sushi</keyword>
<keyword id="KW-0812">Transmembrane</keyword>
<keyword id="KW-1133">Transmembrane helix</keyword>
<name>CR2_MOUSE</name>
<reference key="1">
    <citation type="journal article" date="1990" name="J. Immunol.">
        <title>Comparative structure and evolution of murine CR2. The homolog of the human C3d/EBV receptor (CD21).</title>
        <authorList>
            <person name="Fingeroth J.D."/>
        </authorList>
    </citation>
    <scope>NUCLEOTIDE SEQUENCE [MRNA]</scope>
    <source>
        <strain>BALB/cJ</strain>
    </source>
</reference>
<reference key="2">
    <citation type="journal article" date="1990" name="J. Immunol.">
        <title>A molecular and immunochemical characterization of mouse CR2. Evidence for a single gene model of mouse complement receptors 1 and 2.</title>
        <authorList>
            <person name="Molina H."/>
            <person name="Kinoshita T."/>
            <person name="Inoue K."/>
            <person name="Carel J.-C."/>
            <person name="Holers V.M."/>
        </authorList>
    </citation>
    <scope>NUCLEOTIDE SEQUENCE [MRNA] OF 12-1025</scope>
</reference>
<reference key="3">
    <citation type="journal article" date="1989" name="Proc. Natl. Acad. Sci. U.S.A.">
        <title>Identification of murine complement receptor type 2.</title>
        <authorList>
            <person name="Fingeroth J.D."/>
            <person name="Benedict M.A."/>
            <person name="Levy D.N."/>
            <person name="Strominger J.L."/>
        </authorList>
    </citation>
    <scope>NUCLEOTIDE SEQUENCE [MRNA] OF 343-401 AND 991-1025</scope>
</reference>
<reference key="4">
    <citation type="journal article" date="1989" name="J. Immunol.">
        <title>Murine complement receptor gene family. II. Identification and characterization of the murine homolog (Cr2) to human CR2 and its molecular linkage to Crry.</title>
        <authorList>
            <person name="Kurtz C.B."/>
            <person name="Paul M.S."/>
            <person name="Aegerter M."/>
            <person name="Weis J.J."/>
            <person name="Weis J.H."/>
        </authorList>
    </citation>
    <scope>NUCLEOTIDE SEQUENCE [MRNA] OF 289-1025</scope>
</reference>
<reference key="5">
    <citation type="journal article" date="2002" name="J. Immunol.">
        <title>Functional activity of natural antibody is altered in Cr2-deficient mice.</title>
        <authorList>
            <person name="Reid R.R."/>
            <person name="Woodcock S."/>
            <person name="Shimabukuro-Vornhagen A."/>
            <person name="Austen W.G. Jr."/>
            <person name="Kobzik L."/>
            <person name="Zhang M."/>
            <person name="Hechtman H.B."/>
            <person name="Moore F.D. Jr."/>
            <person name="Carroll M.C."/>
        </authorList>
    </citation>
    <scope>FUNCTION</scope>
    <scope>DISRUPTION PHENOTYPE</scope>
</reference>
<reference key="6">
    <citation type="journal article" date="2010" name="Cell">
        <title>A tissue-specific atlas of mouse protein phosphorylation and expression.</title>
        <authorList>
            <person name="Huttlin E.L."/>
            <person name="Jedrychowski M.P."/>
            <person name="Elias J.E."/>
            <person name="Goswami T."/>
            <person name="Rad R."/>
            <person name="Beausoleil S.A."/>
            <person name="Villen J."/>
            <person name="Haas W."/>
            <person name="Sowa M.E."/>
            <person name="Gygi S.P."/>
        </authorList>
    </citation>
    <scope>IDENTIFICATION BY MASS SPECTROMETRY [LARGE SCALE ANALYSIS]</scope>
    <source>
        <tissue>Spleen</tissue>
    </source>
</reference>
<protein>
    <recommendedName>
        <fullName>Complement receptor type 2</fullName>
        <shortName>Cr2</shortName>
    </recommendedName>
    <alternativeName>
        <fullName>Complement C3d receptor</fullName>
    </alternativeName>
    <cdAntigenName>CD21</cdAntigenName>
</protein>
<gene>
    <name type="primary">Cr2</name>
</gene>